<dbReference type="EC" id="1.3.1.12"/>
<dbReference type="EMBL" id="AP006716">
    <property type="protein sequence ID" value="BAE04853.1"/>
    <property type="molecule type" value="Genomic_DNA"/>
</dbReference>
<dbReference type="RefSeq" id="WP_011275835.1">
    <property type="nucleotide sequence ID" value="NC_007168.1"/>
</dbReference>
<dbReference type="SMR" id="Q4L672"/>
<dbReference type="KEGG" id="sha:SH1544"/>
<dbReference type="eggNOG" id="COG0287">
    <property type="taxonomic scope" value="Bacteria"/>
</dbReference>
<dbReference type="HOGENOM" id="CLU_055968_2_1_9"/>
<dbReference type="OrthoDB" id="9802008at2"/>
<dbReference type="UniPathway" id="UPA00122">
    <property type="reaction ID" value="UER00961"/>
</dbReference>
<dbReference type="Proteomes" id="UP000000543">
    <property type="component" value="Chromosome"/>
</dbReference>
<dbReference type="GO" id="GO:0070403">
    <property type="term" value="F:NAD+ binding"/>
    <property type="evidence" value="ECO:0007669"/>
    <property type="project" value="InterPro"/>
</dbReference>
<dbReference type="GO" id="GO:0008977">
    <property type="term" value="F:prephenate dehydrogenase (NAD+) activity"/>
    <property type="evidence" value="ECO:0007669"/>
    <property type="project" value="UniProtKB-EC"/>
</dbReference>
<dbReference type="GO" id="GO:0004665">
    <property type="term" value="F:prephenate dehydrogenase (NADP+) activity"/>
    <property type="evidence" value="ECO:0007669"/>
    <property type="project" value="InterPro"/>
</dbReference>
<dbReference type="GO" id="GO:0006571">
    <property type="term" value="P:tyrosine biosynthetic process"/>
    <property type="evidence" value="ECO:0007669"/>
    <property type="project" value="UniProtKB-UniPathway"/>
</dbReference>
<dbReference type="CDD" id="cd04909">
    <property type="entry name" value="ACT_PDH-BS"/>
    <property type="match status" value="1"/>
</dbReference>
<dbReference type="FunFam" id="1.10.3660.10:FF:000003">
    <property type="entry name" value="Prephenate dehydrogenase"/>
    <property type="match status" value="1"/>
</dbReference>
<dbReference type="FunFam" id="3.40.50.720:FF:000208">
    <property type="entry name" value="Prephenate dehydrogenase"/>
    <property type="match status" value="1"/>
</dbReference>
<dbReference type="Gene3D" id="1.10.3660.10">
    <property type="entry name" value="6-phosphogluconate dehydrogenase C-terminal like domain"/>
    <property type="match status" value="1"/>
</dbReference>
<dbReference type="Gene3D" id="3.40.50.720">
    <property type="entry name" value="NAD(P)-binding Rossmann-like Domain"/>
    <property type="match status" value="1"/>
</dbReference>
<dbReference type="InterPro" id="IPR008927">
    <property type="entry name" value="6-PGluconate_DH-like_C_sf"/>
</dbReference>
<dbReference type="InterPro" id="IPR045865">
    <property type="entry name" value="ACT-like_dom_sf"/>
</dbReference>
<dbReference type="InterPro" id="IPR002912">
    <property type="entry name" value="ACT_dom"/>
</dbReference>
<dbReference type="InterPro" id="IPR036291">
    <property type="entry name" value="NAD(P)-bd_dom_sf"/>
</dbReference>
<dbReference type="InterPro" id="IPR046825">
    <property type="entry name" value="PDH_C"/>
</dbReference>
<dbReference type="InterPro" id="IPR046826">
    <property type="entry name" value="PDH_N"/>
</dbReference>
<dbReference type="InterPro" id="IPR050812">
    <property type="entry name" value="Preph/Arog_dehydrog"/>
</dbReference>
<dbReference type="InterPro" id="IPR003099">
    <property type="entry name" value="Prephen_DH"/>
</dbReference>
<dbReference type="NCBIfam" id="NF005106">
    <property type="entry name" value="PRK06545.1-4"/>
    <property type="match status" value="1"/>
</dbReference>
<dbReference type="NCBIfam" id="NF005107">
    <property type="entry name" value="PRK06545.1-5"/>
    <property type="match status" value="1"/>
</dbReference>
<dbReference type="PANTHER" id="PTHR21363">
    <property type="entry name" value="PREPHENATE DEHYDROGENASE"/>
    <property type="match status" value="1"/>
</dbReference>
<dbReference type="PANTHER" id="PTHR21363:SF0">
    <property type="entry name" value="PREPHENATE DEHYDROGENASE [NADP(+)]"/>
    <property type="match status" value="1"/>
</dbReference>
<dbReference type="Pfam" id="PF20463">
    <property type="entry name" value="PDH_C"/>
    <property type="match status" value="1"/>
</dbReference>
<dbReference type="Pfam" id="PF02153">
    <property type="entry name" value="PDH_N"/>
    <property type="match status" value="1"/>
</dbReference>
<dbReference type="SUPFAM" id="SSF48179">
    <property type="entry name" value="6-phosphogluconate dehydrogenase C-terminal domain-like"/>
    <property type="match status" value="1"/>
</dbReference>
<dbReference type="SUPFAM" id="SSF55021">
    <property type="entry name" value="ACT-like"/>
    <property type="match status" value="1"/>
</dbReference>
<dbReference type="SUPFAM" id="SSF51735">
    <property type="entry name" value="NAD(P)-binding Rossmann-fold domains"/>
    <property type="match status" value="1"/>
</dbReference>
<dbReference type="PROSITE" id="PS51671">
    <property type="entry name" value="ACT"/>
    <property type="match status" value="1"/>
</dbReference>
<dbReference type="PROSITE" id="PS51176">
    <property type="entry name" value="PDH_ADH"/>
    <property type="match status" value="1"/>
</dbReference>
<accession>Q4L672</accession>
<protein>
    <recommendedName>
        <fullName>Prephenate dehydrogenase</fullName>
        <shortName>PDH</shortName>
        <ecNumber>1.3.1.12</ecNumber>
    </recommendedName>
</protein>
<sequence length="363" mass="40442">MKNILFIGLGLIGGSLASNLKYYQPNLTISAFDADKDQLEKALSIGIIDKKIEDYSEGVKNADIIIYATPVQQTELYLKELPNYQTQSHLIVTDTGSTKSNIQSYEKFLLNNDIHLVGGHPMAGSHKSGVLNSKKHLFENAYYILVYDDARNAESAKKLQTLLSTTSAKFITTSAQEHDYVTGVVSHIPHIIASSLVHLSETNSKNHTLVTQLAAGGFRDVTRIASSNADMWRDITFSNQENILHLLEMLQQQLDSISSHIRLNDTNEVHSFFSGAKKFRDQLPVKQQGALSIAYDLYVDIPDKSGMISKVTSILSLHNISISNLKILEIREDILGALQISFKTPEDRERGIKALSDFETYIL</sequence>
<proteinExistence type="inferred from homology"/>
<keyword id="KW-0028">Amino-acid biosynthesis</keyword>
<keyword id="KW-0057">Aromatic amino acid biosynthesis</keyword>
<keyword id="KW-0520">NAD</keyword>
<keyword id="KW-0560">Oxidoreductase</keyword>
<keyword id="KW-0827">Tyrosine biosynthesis</keyword>
<reference key="1">
    <citation type="journal article" date="2005" name="J. Bacteriol.">
        <title>Whole-genome sequencing of Staphylococcus haemolyticus uncovers the extreme plasticity of its genome and the evolution of human-colonizing staphylococcal species.</title>
        <authorList>
            <person name="Takeuchi F."/>
            <person name="Watanabe S."/>
            <person name="Baba T."/>
            <person name="Yuzawa H."/>
            <person name="Ito T."/>
            <person name="Morimoto Y."/>
            <person name="Kuroda M."/>
            <person name="Cui L."/>
            <person name="Takahashi M."/>
            <person name="Ankai A."/>
            <person name="Baba S."/>
            <person name="Fukui S."/>
            <person name="Lee J.C."/>
            <person name="Hiramatsu K."/>
        </authorList>
    </citation>
    <scope>NUCLEOTIDE SEQUENCE [LARGE SCALE GENOMIC DNA]</scope>
    <source>
        <strain>JCSC1435</strain>
    </source>
</reference>
<name>TYRA_STAHJ</name>
<organism>
    <name type="scientific">Staphylococcus haemolyticus (strain JCSC1435)</name>
    <dbReference type="NCBI Taxonomy" id="279808"/>
    <lineage>
        <taxon>Bacteria</taxon>
        <taxon>Bacillati</taxon>
        <taxon>Bacillota</taxon>
        <taxon>Bacilli</taxon>
        <taxon>Bacillales</taxon>
        <taxon>Staphylococcaceae</taxon>
        <taxon>Staphylococcus</taxon>
    </lineage>
</organism>
<feature type="chain" id="PRO_0000282665" description="Prephenate dehydrogenase">
    <location>
        <begin position="1"/>
        <end position="363"/>
    </location>
</feature>
<feature type="domain" description="Prephenate/arogenate dehydrogenase" evidence="2">
    <location>
        <begin position="2"/>
        <end position="291"/>
    </location>
</feature>
<feature type="domain" description="ACT" evidence="3">
    <location>
        <begin position="296"/>
        <end position="363"/>
    </location>
</feature>
<feature type="binding site" evidence="1">
    <location>
        <begin position="3"/>
        <end position="33"/>
    </location>
    <ligand>
        <name>NAD(+)</name>
        <dbReference type="ChEBI" id="CHEBI:57540"/>
    </ligand>
</feature>
<gene>
    <name type="primary">tyrA</name>
    <name type="ordered locus">SH1544</name>
</gene>
<evidence type="ECO:0000255" key="1"/>
<evidence type="ECO:0000255" key="2">
    <source>
        <dbReference type="PROSITE-ProRule" id="PRU00522"/>
    </source>
</evidence>
<evidence type="ECO:0000255" key="3">
    <source>
        <dbReference type="PROSITE-ProRule" id="PRU01007"/>
    </source>
</evidence>
<evidence type="ECO:0000305" key="4"/>
<comment type="catalytic activity">
    <reaction>
        <text>prephenate + NAD(+) = 3-(4-hydroxyphenyl)pyruvate + CO2 + NADH</text>
        <dbReference type="Rhea" id="RHEA:13869"/>
        <dbReference type="ChEBI" id="CHEBI:16526"/>
        <dbReference type="ChEBI" id="CHEBI:29934"/>
        <dbReference type="ChEBI" id="CHEBI:36242"/>
        <dbReference type="ChEBI" id="CHEBI:57540"/>
        <dbReference type="ChEBI" id="CHEBI:57945"/>
        <dbReference type="EC" id="1.3.1.12"/>
    </reaction>
</comment>
<comment type="pathway">
    <text>Amino-acid biosynthesis; L-tyrosine biosynthesis; (4-hydroxyphenyl)pyruvate from prephenate (NAD(+) route): step 1/1.</text>
</comment>
<comment type="similarity">
    <text evidence="4">Belongs to the prephenate/arogenate dehydrogenase family.</text>
</comment>